<evidence type="ECO:0000269" key="1">
    <source>
    </source>
</evidence>
<evidence type="ECO:0000305" key="2"/>
<accession>P38577</accession>
<dbReference type="EMBL" id="X81803">
    <property type="protein sequence ID" value="CAA57405.1"/>
    <property type="molecule type" value="Genomic_DNA"/>
</dbReference>
<dbReference type="PIR" id="S52208">
    <property type="entry name" value="S52208"/>
</dbReference>
<dbReference type="RefSeq" id="WP_032490739.1">
    <property type="nucleotide sequence ID" value="NZ_JBGQPW010000012.1"/>
</dbReference>
<dbReference type="SMR" id="P38577"/>
<dbReference type="TCDB" id="1.C.24.1.5">
    <property type="family name" value="the pediocin (pediocin) family"/>
</dbReference>
<dbReference type="GO" id="GO:0005576">
    <property type="term" value="C:extracellular region"/>
    <property type="evidence" value="ECO:0007669"/>
    <property type="project" value="UniProtKB-SubCell"/>
</dbReference>
<dbReference type="GO" id="GO:0042742">
    <property type="term" value="P:defense response to bacterium"/>
    <property type="evidence" value="ECO:0007669"/>
    <property type="project" value="UniProtKB-KW"/>
</dbReference>
<dbReference type="GO" id="GO:0031640">
    <property type="term" value="P:killing of cells of another organism"/>
    <property type="evidence" value="ECO:0007669"/>
    <property type="project" value="UniProtKB-KW"/>
</dbReference>
<dbReference type="Gene3D" id="1.20.5.130">
    <property type="match status" value="1"/>
</dbReference>
<dbReference type="InterPro" id="IPR002633">
    <property type="entry name" value="Bacteriocin_IIa"/>
</dbReference>
<dbReference type="InterPro" id="IPR023384">
    <property type="entry name" value="Bacteriocin_IIa_CS"/>
</dbReference>
<dbReference type="InterPro" id="IPR023388">
    <property type="entry name" value="Bacteriocin_IIa_dom_sf"/>
</dbReference>
<dbReference type="Pfam" id="PF01721">
    <property type="entry name" value="Bacteriocin_II"/>
    <property type="match status" value="1"/>
</dbReference>
<dbReference type="PROSITE" id="PS60030">
    <property type="entry name" value="BACTERIOCIN_IIA"/>
    <property type="match status" value="1"/>
</dbReference>
<gene>
    <name type="primary">mesY</name>
</gene>
<reference key="1">
    <citation type="journal article" date="1995" name="Microbiology">
        <title>Mesentericin Y105 gene clusters in Leuconostoc mesenteroides Y105.</title>
        <authorList>
            <person name="Fremaux C."/>
            <person name="Hechard A."/>
            <person name="Cenatiempo Y."/>
        </authorList>
    </citation>
    <scope>NUCLEOTIDE SEQUENCE [GENOMIC DNA]</scope>
    <source>
        <strain>Y105</strain>
    </source>
</reference>
<reference key="2">
    <citation type="journal article" date="1992" name="J. Gen. Microbiol.">
        <title>Characterization and purification of mesentericin Y105, an anti-Listeria bacteriocin from Leuconostoc mesenteroides.</title>
        <authorList>
            <person name="Hechard Y."/>
            <person name="Derijard B."/>
            <person name="Letellier F."/>
            <person name="Cenatiempo Y."/>
        </authorList>
    </citation>
    <scope>PROTEIN SEQUENCE OF 25-60</scope>
    <source>
        <strain>Y105</strain>
    </source>
</reference>
<geneLocation type="plasmid">
    <name>pHY30</name>
</geneLocation>
<name>MTCY_LEUME</name>
<organism>
    <name type="scientific">Leuconostoc mesenteroides</name>
    <dbReference type="NCBI Taxonomy" id="1245"/>
    <lineage>
        <taxon>Bacteria</taxon>
        <taxon>Bacillati</taxon>
        <taxon>Bacillota</taxon>
        <taxon>Bacilli</taxon>
        <taxon>Lactobacillales</taxon>
        <taxon>Lactobacillaceae</taxon>
        <taxon>Leuconostoc</taxon>
    </lineage>
</organism>
<protein>
    <recommendedName>
        <fullName>Bacteriocin mesentericin Y105</fullName>
    </recommendedName>
</protein>
<proteinExistence type="evidence at protein level"/>
<comment type="function">
    <text>Bacteriocin active against Listeria monocytogenes.</text>
</comment>
<comment type="subcellular location">
    <subcellularLocation>
        <location>Secreted</location>
    </subcellularLocation>
</comment>
<comment type="similarity">
    <text evidence="2">Belongs to the bacteriocin class IIA/YGNGV family.</text>
</comment>
<feature type="signal peptide" evidence="1">
    <location>
        <begin position="1"/>
        <end position="24"/>
    </location>
</feature>
<feature type="chain" id="PRO_0000002744" description="Bacteriocin mesentericin Y105">
    <location>
        <begin position="25"/>
        <end position="61"/>
    </location>
</feature>
<feature type="disulfide bond" evidence="2">
    <location>
        <begin position="33"/>
        <end position="38"/>
    </location>
</feature>
<sequence>MTNMKSVEAYQQLDNQNLKKVVGGKYYGNGVHCTKSGCSVNWGEAASAGIHRLANGGNGFW</sequence>
<keyword id="KW-0044">Antibiotic</keyword>
<keyword id="KW-0929">Antimicrobial</keyword>
<keyword id="KW-0078">Bacteriocin</keyword>
<keyword id="KW-0903">Direct protein sequencing</keyword>
<keyword id="KW-1015">Disulfide bond</keyword>
<keyword id="KW-0614">Plasmid</keyword>
<keyword id="KW-0964">Secreted</keyword>
<keyword id="KW-0732">Signal</keyword>